<keyword id="KW-0963">Cytoplasm</keyword>
<keyword id="KW-0223">Dioxygenase</keyword>
<keyword id="KW-0408">Iron</keyword>
<keyword id="KW-0479">Metal-binding</keyword>
<keyword id="KW-0560">Oxidoreductase</keyword>
<keyword id="KW-0662">Pyridine nucleotide biosynthesis</keyword>
<keyword id="KW-1185">Reference proteome</keyword>
<gene>
    <name evidence="1" type="primary">BNA1</name>
    <name type="ordered locus">YALI0B02852g</name>
</gene>
<sequence length="171" mass="19550">MLQEPINLPKWLEENQHLLKPPVNNFCIQRGGYTVMIVGGPNARTDYHINQTPEWFHQKKGHMTLKVVDDGEFRDITINEGDIFLLPANVPHNPVRYADTIGVVVEQDRPEGMKDALRWYCPNEKCREIVFENSFQLVDLGTQIKEAILDFDGDIEKRTCKACGTVATSRP</sequence>
<dbReference type="EC" id="1.13.11.6" evidence="1"/>
<dbReference type="EMBL" id="CR382128">
    <property type="protein sequence ID" value="CAG82659.1"/>
    <property type="molecule type" value="Genomic_DNA"/>
</dbReference>
<dbReference type="RefSeq" id="XP_500441.1">
    <property type="nucleotide sequence ID" value="XM_500441.1"/>
</dbReference>
<dbReference type="SMR" id="Q6CFX1"/>
<dbReference type="FunCoup" id="Q6CFX1">
    <property type="interactions" value="149"/>
</dbReference>
<dbReference type="STRING" id="284591.Q6CFX1"/>
<dbReference type="EnsemblFungi" id="CAG82659">
    <property type="protein sequence ID" value="CAG82659"/>
    <property type="gene ID" value="YALI0_B02852g"/>
</dbReference>
<dbReference type="KEGG" id="yli:2907509"/>
<dbReference type="VEuPathDB" id="FungiDB:YALI0_B02852g"/>
<dbReference type="HOGENOM" id="CLU_095765_0_0_1"/>
<dbReference type="InParanoid" id="Q6CFX1"/>
<dbReference type="OMA" id="KPPVGNQ"/>
<dbReference type="OrthoDB" id="68144at4891"/>
<dbReference type="UniPathway" id="UPA00253">
    <property type="reaction ID" value="UER00330"/>
</dbReference>
<dbReference type="Proteomes" id="UP000001300">
    <property type="component" value="Chromosome B"/>
</dbReference>
<dbReference type="GO" id="GO:0005737">
    <property type="term" value="C:cytoplasm"/>
    <property type="evidence" value="ECO:0000318"/>
    <property type="project" value="GO_Central"/>
</dbReference>
<dbReference type="GO" id="GO:0000334">
    <property type="term" value="F:3-hydroxyanthranilate 3,4-dioxygenase activity"/>
    <property type="evidence" value="ECO:0000318"/>
    <property type="project" value="GO_Central"/>
</dbReference>
<dbReference type="GO" id="GO:0008198">
    <property type="term" value="F:ferrous iron binding"/>
    <property type="evidence" value="ECO:0007669"/>
    <property type="project" value="UniProtKB-UniRule"/>
</dbReference>
<dbReference type="GO" id="GO:0034354">
    <property type="term" value="P:'de novo' NAD biosynthetic process from L-tryptophan"/>
    <property type="evidence" value="ECO:0000318"/>
    <property type="project" value="GO_Central"/>
</dbReference>
<dbReference type="GO" id="GO:0043420">
    <property type="term" value="P:anthranilate metabolic process"/>
    <property type="evidence" value="ECO:0007669"/>
    <property type="project" value="UniProtKB-UniRule"/>
</dbReference>
<dbReference type="GO" id="GO:0006569">
    <property type="term" value="P:L-tryptophan catabolic process"/>
    <property type="evidence" value="ECO:0007669"/>
    <property type="project" value="UniProtKB-UniRule"/>
</dbReference>
<dbReference type="GO" id="GO:0019805">
    <property type="term" value="P:quinolinate biosynthetic process"/>
    <property type="evidence" value="ECO:0007669"/>
    <property type="project" value="UniProtKB-UniRule"/>
</dbReference>
<dbReference type="GO" id="GO:0046874">
    <property type="term" value="P:quinolinate metabolic process"/>
    <property type="evidence" value="ECO:0000318"/>
    <property type="project" value="GO_Central"/>
</dbReference>
<dbReference type="CDD" id="cd06123">
    <property type="entry name" value="cupin_HAO"/>
    <property type="match status" value="1"/>
</dbReference>
<dbReference type="FunFam" id="2.60.120.10:FF:000093">
    <property type="entry name" value="3-hydroxyanthranilate 3,4-dioxygenase"/>
    <property type="match status" value="1"/>
</dbReference>
<dbReference type="Gene3D" id="2.60.120.10">
    <property type="entry name" value="Jelly Rolls"/>
    <property type="match status" value="1"/>
</dbReference>
<dbReference type="HAMAP" id="MF_00825">
    <property type="entry name" value="3_HAO"/>
    <property type="match status" value="1"/>
</dbReference>
<dbReference type="InterPro" id="IPR010329">
    <property type="entry name" value="3hydroanth_dOase"/>
</dbReference>
<dbReference type="InterPro" id="IPR014710">
    <property type="entry name" value="RmlC-like_jellyroll"/>
</dbReference>
<dbReference type="InterPro" id="IPR011051">
    <property type="entry name" value="RmlC_Cupin_sf"/>
</dbReference>
<dbReference type="NCBIfam" id="TIGR03037">
    <property type="entry name" value="anthran_nbaC"/>
    <property type="match status" value="1"/>
</dbReference>
<dbReference type="PANTHER" id="PTHR15497">
    <property type="entry name" value="3-HYDROXYANTHRANILATE 3,4-DIOXYGENASE"/>
    <property type="match status" value="1"/>
</dbReference>
<dbReference type="PANTHER" id="PTHR15497:SF1">
    <property type="entry name" value="3-HYDROXYANTHRANILATE 3,4-DIOXYGENASE"/>
    <property type="match status" value="1"/>
</dbReference>
<dbReference type="Pfam" id="PF06052">
    <property type="entry name" value="3-HAO"/>
    <property type="match status" value="1"/>
</dbReference>
<dbReference type="SUPFAM" id="SSF51182">
    <property type="entry name" value="RmlC-like cupins"/>
    <property type="match status" value="1"/>
</dbReference>
<feature type="chain" id="PRO_0000361996" description="3-hydroxyanthranilate 3,4-dioxygenase">
    <location>
        <begin position="1"/>
        <end position="171"/>
    </location>
</feature>
<feature type="binding site" evidence="1">
    <location>
        <position position="44"/>
    </location>
    <ligand>
        <name>O2</name>
        <dbReference type="ChEBI" id="CHEBI:15379"/>
    </ligand>
</feature>
<feature type="binding site" evidence="1">
    <location>
        <position position="48"/>
    </location>
    <ligand>
        <name>Fe cation</name>
        <dbReference type="ChEBI" id="CHEBI:24875"/>
        <note>catalytic</note>
    </ligand>
</feature>
<feature type="binding site" evidence="1">
    <location>
        <position position="54"/>
    </location>
    <ligand>
        <name>Fe cation</name>
        <dbReference type="ChEBI" id="CHEBI:24875"/>
        <note>catalytic</note>
    </ligand>
</feature>
<feature type="binding site" evidence="1">
    <location>
        <position position="54"/>
    </location>
    <ligand>
        <name>substrate</name>
    </ligand>
</feature>
<feature type="binding site" evidence="1">
    <location>
        <position position="92"/>
    </location>
    <ligand>
        <name>Fe cation</name>
        <dbReference type="ChEBI" id="CHEBI:24875"/>
        <note>catalytic</note>
    </ligand>
</feature>
<feature type="binding site" evidence="1">
    <location>
        <position position="96"/>
    </location>
    <ligand>
        <name>substrate</name>
    </ligand>
</feature>
<feature type="binding site" evidence="1">
    <location>
        <position position="106"/>
    </location>
    <ligand>
        <name>substrate</name>
    </ligand>
</feature>
<feature type="binding site" evidence="1">
    <location>
        <position position="121"/>
    </location>
    <ligand>
        <name>a divalent metal cation</name>
        <dbReference type="ChEBI" id="CHEBI:60240"/>
    </ligand>
</feature>
<feature type="binding site" evidence="1">
    <location>
        <position position="126"/>
    </location>
    <ligand>
        <name>a divalent metal cation</name>
        <dbReference type="ChEBI" id="CHEBI:60240"/>
    </ligand>
</feature>
<feature type="binding site" evidence="1">
    <location>
        <position position="160"/>
    </location>
    <ligand>
        <name>a divalent metal cation</name>
        <dbReference type="ChEBI" id="CHEBI:60240"/>
    </ligand>
</feature>
<feature type="binding site" evidence="1">
    <location>
        <position position="163"/>
    </location>
    <ligand>
        <name>a divalent metal cation</name>
        <dbReference type="ChEBI" id="CHEBI:60240"/>
    </ligand>
</feature>
<name>3HAO_YARLI</name>
<comment type="function">
    <text evidence="1">Catalyzes the oxidative ring opening of 3-hydroxyanthranilate to 2-amino-3-carboxymuconate semialdehyde, which spontaneously cyclizes to quinolinate.</text>
</comment>
<comment type="catalytic activity">
    <reaction evidence="1">
        <text>3-hydroxyanthranilate + O2 = (2Z,4Z)-2-amino-3-carboxymuconate 6-semialdehyde</text>
        <dbReference type="Rhea" id="RHEA:17953"/>
        <dbReference type="ChEBI" id="CHEBI:15379"/>
        <dbReference type="ChEBI" id="CHEBI:36559"/>
        <dbReference type="ChEBI" id="CHEBI:77612"/>
        <dbReference type="EC" id="1.13.11.6"/>
    </reaction>
</comment>
<comment type="cofactor">
    <cofactor evidence="1">
        <name>Fe(2+)</name>
        <dbReference type="ChEBI" id="CHEBI:29033"/>
    </cofactor>
</comment>
<comment type="pathway">
    <text evidence="1">Cofactor biosynthesis; NAD(+) biosynthesis; quinolinate from L-kynurenine: step 3/3.</text>
</comment>
<comment type="subcellular location">
    <subcellularLocation>
        <location evidence="1">Cytoplasm</location>
    </subcellularLocation>
</comment>
<comment type="similarity">
    <text evidence="1">Belongs to the 3-HAO family.</text>
</comment>
<proteinExistence type="inferred from homology"/>
<reference key="1">
    <citation type="journal article" date="2004" name="Nature">
        <title>Genome evolution in yeasts.</title>
        <authorList>
            <person name="Dujon B."/>
            <person name="Sherman D."/>
            <person name="Fischer G."/>
            <person name="Durrens P."/>
            <person name="Casaregola S."/>
            <person name="Lafontaine I."/>
            <person name="de Montigny J."/>
            <person name="Marck C."/>
            <person name="Neuveglise C."/>
            <person name="Talla E."/>
            <person name="Goffard N."/>
            <person name="Frangeul L."/>
            <person name="Aigle M."/>
            <person name="Anthouard V."/>
            <person name="Babour A."/>
            <person name="Barbe V."/>
            <person name="Barnay S."/>
            <person name="Blanchin S."/>
            <person name="Beckerich J.-M."/>
            <person name="Beyne E."/>
            <person name="Bleykasten C."/>
            <person name="Boisrame A."/>
            <person name="Boyer J."/>
            <person name="Cattolico L."/>
            <person name="Confanioleri F."/>
            <person name="de Daruvar A."/>
            <person name="Despons L."/>
            <person name="Fabre E."/>
            <person name="Fairhead C."/>
            <person name="Ferry-Dumazet H."/>
            <person name="Groppi A."/>
            <person name="Hantraye F."/>
            <person name="Hennequin C."/>
            <person name="Jauniaux N."/>
            <person name="Joyet P."/>
            <person name="Kachouri R."/>
            <person name="Kerrest A."/>
            <person name="Koszul R."/>
            <person name="Lemaire M."/>
            <person name="Lesur I."/>
            <person name="Ma L."/>
            <person name="Muller H."/>
            <person name="Nicaud J.-M."/>
            <person name="Nikolski M."/>
            <person name="Oztas S."/>
            <person name="Ozier-Kalogeropoulos O."/>
            <person name="Pellenz S."/>
            <person name="Potier S."/>
            <person name="Richard G.-F."/>
            <person name="Straub M.-L."/>
            <person name="Suleau A."/>
            <person name="Swennen D."/>
            <person name="Tekaia F."/>
            <person name="Wesolowski-Louvel M."/>
            <person name="Westhof E."/>
            <person name="Wirth B."/>
            <person name="Zeniou-Meyer M."/>
            <person name="Zivanovic Y."/>
            <person name="Bolotin-Fukuhara M."/>
            <person name="Thierry A."/>
            <person name="Bouchier C."/>
            <person name="Caudron B."/>
            <person name="Scarpelli C."/>
            <person name="Gaillardin C."/>
            <person name="Weissenbach J."/>
            <person name="Wincker P."/>
            <person name="Souciet J.-L."/>
        </authorList>
    </citation>
    <scope>NUCLEOTIDE SEQUENCE [LARGE SCALE GENOMIC DNA]</scope>
    <source>
        <strain>CLIB 122 / E 150</strain>
    </source>
</reference>
<organism>
    <name type="scientific">Yarrowia lipolytica (strain CLIB 122 / E 150)</name>
    <name type="common">Yeast</name>
    <name type="synonym">Candida lipolytica</name>
    <dbReference type="NCBI Taxonomy" id="284591"/>
    <lineage>
        <taxon>Eukaryota</taxon>
        <taxon>Fungi</taxon>
        <taxon>Dikarya</taxon>
        <taxon>Ascomycota</taxon>
        <taxon>Saccharomycotina</taxon>
        <taxon>Dipodascomycetes</taxon>
        <taxon>Dipodascales</taxon>
        <taxon>Dipodascales incertae sedis</taxon>
        <taxon>Yarrowia</taxon>
    </lineage>
</organism>
<protein>
    <recommendedName>
        <fullName evidence="1">3-hydroxyanthranilate 3,4-dioxygenase</fullName>
        <ecNumber evidence="1">1.13.11.6</ecNumber>
    </recommendedName>
    <alternativeName>
        <fullName evidence="1">3-hydroxyanthranilate oxygenase</fullName>
        <shortName evidence="1">3-HAO</shortName>
    </alternativeName>
    <alternativeName>
        <fullName evidence="1">3-hydroxyanthranilic acid dioxygenase</fullName>
        <shortName evidence="1">HAD</shortName>
    </alternativeName>
    <alternativeName>
        <fullName evidence="1">Biosynthesis of nicotinic acid protein 1</fullName>
    </alternativeName>
</protein>
<evidence type="ECO:0000255" key="1">
    <source>
        <dbReference type="HAMAP-Rule" id="MF_03019"/>
    </source>
</evidence>
<accession>Q6CFX1</accession>